<evidence type="ECO:0000255" key="1"/>
<evidence type="ECO:0000305" key="2"/>
<feature type="chain" id="PRO_0000082182" description="ATP synthase subunit a">
    <location>
        <begin position="1"/>
        <end position="386"/>
    </location>
</feature>
<feature type="transmembrane region" description="Helical" evidence="1">
    <location>
        <begin position="150"/>
        <end position="170"/>
    </location>
</feature>
<feature type="transmembrane region" description="Helical" evidence="1">
    <location>
        <begin position="243"/>
        <end position="263"/>
    </location>
</feature>
<feature type="transmembrane region" description="Helical" evidence="1">
    <location>
        <begin position="270"/>
        <end position="290"/>
    </location>
</feature>
<feature type="transmembrane region" description="Helical" evidence="1">
    <location>
        <begin position="310"/>
        <end position="330"/>
    </location>
</feature>
<dbReference type="EMBL" id="X62092">
    <property type="protein sequence ID" value="CAA44002.1"/>
    <property type="molecule type" value="Genomic_DNA"/>
</dbReference>
<dbReference type="PIR" id="JA0095">
    <property type="entry name" value="PWWT6"/>
</dbReference>
<dbReference type="RefSeq" id="YP_008758162.1">
    <property type="nucleotide sequence ID" value="NC_022714.1"/>
</dbReference>
<dbReference type="SMR" id="P68526"/>
<dbReference type="EnsemblPlants" id="Tritim_EIv0.3_0654730.1">
    <property type="protein sequence ID" value="Tritim_EIv0.3_0654730.1.CDS1"/>
    <property type="gene ID" value="Tritim_EIv0.3_0654730"/>
</dbReference>
<dbReference type="EnsemblPlants" id="Tritim_EIv0.3_1388280.1">
    <property type="protein sequence ID" value="Tritim_EIv0.3_1388280.1.CDS1"/>
    <property type="gene ID" value="Tritim_EIv0.3_1388280"/>
</dbReference>
<dbReference type="EnsemblPlants" id="Tritim_EIv0.3_1532130.1">
    <property type="protein sequence ID" value="Tritim_EIv0.3_1532130.1.CDS1"/>
    <property type="gene ID" value="Tritim_EIv0.3_1532130"/>
</dbReference>
<dbReference type="EnsemblPlants" id="Tritim_EIv0.3_1655650.1">
    <property type="protein sequence ID" value="Tritim_EIv0.3_1655650.1.CDS1"/>
    <property type="gene ID" value="Tritim_EIv0.3_1655650"/>
</dbReference>
<dbReference type="EnsemblPlants" id="Tritim_EIv0.3_1664070.1">
    <property type="protein sequence ID" value="Tritim_EIv0.3_1664070.1.CDS1"/>
    <property type="gene ID" value="Tritim_EIv0.3_1664070"/>
</dbReference>
<dbReference type="GeneID" id="17428077"/>
<dbReference type="Gramene" id="Tritim_EIv0.3_0654730.1">
    <property type="protein sequence ID" value="Tritim_EIv0.3_0654730.1.CDS1"/>
    <property type="gene ID" value="Tritim_EIv0.3_0654730"/>
</dbReference>
<dbReference type="Gramene" id="Tritim_EIv0.3_1388280.1">
    <property type="protein sequence ID" value="Tritim_EIv0.3_1388280.1.CDS1"/>
    <property type="gene ID" value="Tritim_EIv0.3_1388280"/>
</dbReference>
<dbReference type="Gramene" id="Tritim_EIv0.3_1532130.1">
    <property type="protein sequence ID" value="Tritim_EIv0.3_1532130.1.CDS1"/>
    <property type="gene ID" value="Tritim_EIv0.3_1532130"/>
</dbReference>
<dbReference type="Gramene" id="Tritim_EIv0.3_1655650.1">
    <property type="protein sequence ID" value="Tritim_EIv0.3_1655650.1.CDS1"/>
    <property type="gene ID" value="Tritim_EIv0.3_1655650"/>
</dbReference>
<dbReference type="Gramene" id="Tritim_EIv0.3_1664070.1">
    <property type="protein sequence ID" value="Tritim_EIv0.3_1664070.1.CDS1"/>
    <property type="gene ID" value="Tritim_EIv0.3_1664070"/>
</dbReference>
<dbReference type="GO" id="GO:0005743">
    <property type="term" value="C:mitochondrial inner membrane"/>
    <property type="evidence" value="ECO:0007669"/>
    <property type="project" value="UniProtKB-SubCell"/>
</dbReference>
<dbReference type="GO" id="GO:0045259">
    <property type="term" value="C:proton-transporting ATP synthase complex"/>
    <property type="evidence" value="ECO:0007669"/>
    <property type="project" value="UniProtKB-KW"/>
</dbReference>
<dbReference type="GO" id="GO:0046933">
    <property type="term" value="F:proton-transporting ATP synthase activity, rotational mechanism"/>
    <property type="evidence" value="ECO:0007669"/>
    <property type="project" value="TreeGrafter"/>
</dbReference>
<dbReference type="CDD" id="cd00310">
    <property type="entry name" value="ATP-synt_Fo_a_6"/>
    <property type="match status" value="1"/>
</dbReference>
<dbReference type="FunFam" id="1.20.120.220:FF:000003">
    <property type="entry name" value="ATP synthase subunit a"/>
    <property type="match status" value="1"/>
</dbReference>
<dbReference type="Gene3D" id="1.20.120.220">
    <property type="entry name" value="ATP synthase, F0 complex, subunit A"/>
    <property type="match status" value="1"/>
</dbReference>
<dbReference type="HAMAP" id="MF_01393">
    <property type="entry name" value="ATP_synth_a_bact"/>
    <property type="match status" value="1"/>
</dbReference>
<dbReference type="InterPro" id="IPR000568">
    <property type="entry name" value="ATP_synth_F0_asu"/>
</dbReference>
<dbReference type="InterPro" id="IPR023011">
    <property type="entry name" value="ATP_synth_F0_asu_AS"/>
</dbReference>
<dbReference type="InterPro" id="IPR045083">
    <property type="entry name" value="ATP_synth_F0_asu_bact/mt"/>
</dbReference>
<dbReference type="InterPro" id="IPR035908">
    <property type="entry name" value="F0_ATP_A_sf"/>
</dbReference>
<dbReference type="NCBIfam" id="TIGR01131">
    <property type="entry name" value="ATP_synt_6_or_A"/>
    <property type="match status" value="1"/>
</dbReference>
<dbReference type="NCBIfam" id="NF004482">
    <property type="entry name" value="PRK05815.2-4"/>
    <property type="match status" value="1"/>
</dbReference>
<dbReference type="PANTHER" id="PTHR11410">
    <property type="entry name" value="ATP SYNTHASE SUBUNIT A"/>
    <property type="match status" value="1"/>
</dbReference>
<dbReference type="PANTHER" id="PTHR11410:SF0">
    <property type="entry name" value="ATP SYNTHASE SUBUNIT A"/>
    <property type="match status" value="1"/>
</dbReference>
<dbReference type="Pfam" id="PF00119">
    <property type="entry name" value="ATP-synt_A"/>
    <property type="match status" value="1"/>
</dbReference>
<dbReference type="PRINTS" id="PR00123">
    <property type="entry name" value="ATPASEA"/>
</dbReference>
<dbReference type="SUPFAM" id="SSF81336">
    <property type="entry name" value="F1F0 ATP synthase subunit A"/>
    <property type="match status" value="1"/>
</dbReference>
<dbReference type="PROSITE" id="PS00449">
    <property type="entry name" value="ATPASE_A"/>
    <property type="match status" value="1"/>
</dbReference>
<gene>
    <name type="primary">ATP6</name>
</gene>
<proteinExistence type="inferred from homology"/>
<reference key="1">
    <citation type="journal article" date="1993" name="Theor. Appl. Genet.">
        <title>Mitochondrial DNA of cytoplasmic male-sterile Triticum timopheevi: rearrangement of upstream sequences of the atp6 and orf25 genes.</title>
        <authorList>
            <person name="Mohr S.K."/>
            <person name="Schulte-Kappert E."/>
            <person name="Oettler G."/>
            <person name="Odenbach W."/>
            <person name="Kueck U."/>
        </authorList>
        <dbReference type="AGRICOLA" id="IND93035141"/>
    </citation>
    <scope>NUCLEOTIDE SEQUENCE [GENOMIC DNA]</scope>
    <source>
        <strain>I/2</strain>
    </source>
</reference>
<comment type="function">
    <text>Mitochondrial membrane ATP synthase (F(1)F(0) ATP synthase or Complex V) produces ATP from ADP in the presence of a proton gradient across the membrane which is generated by electron transport complexes of the respiratory chain. F-type ATPases consist of two structural domains, F(1) - containing the extramembraneous catalytic core and F(0) - containing the membrane proton channel, linked together by a central stalk and a peripheral stalk. During catalysis, ATP synthesis in the catalytic domain of F(1) is coupled via a rotary mechanism of the central stalk subunits to proton translocation. Key component of the proton channel; it may play a direct role in the translocation of protons across the membrane.</text>
</comment>
<comment type="subunit">
    <text>F-type ATPases have 2 components, CF(1) - the catalytic core - and CF(0) - the membrane proton channel. CF(1) has five subunits: alpha(3), beta(3), gamma(1), delta(1), epsilon(1). CF(0) has three main subunits: a, b and c.</text>
</comment>
<comment type="subcellular location">
    <subcellularLocation>
        <location>Mitochondrion inner membrane</location>
        <topology>Multi-pass membrane protein</topology>
    </subcellularLocation>
</comment>
<comment type="similarity">
    <text evidence="2">Belongs to the ATPase A chain family.</text>
</comment>
<geneLocation type="mitochondrion"/>
<organism>
    <name type="scientific">Triticum timopheevii</name>
    <name type="common">Timopheev's wheat</name>
    <name type="synonym">Triticum dicoccon var. timopheevii</name>
    <dbReference type="NCBI Taxonomy" id="4570"/>
    <lineage>
        <taxon>Eukaryota</taxon>
        <taxon>Viridiplantae</taxon>
        <taxon>Streptophyta</taxon>
        <taxon>Embryophyta</taxon>
        <taxon>Tracheophyta</taxon>
        <taxon>Spermatophyta</taxon>
        <taxon>Magnoliopsida</taxon>
        <taxon>Liliopsida</taxon>
        <taxon>Poales</taxon>
        <taxon>Poaceae</taxon>
        <taxon>BOP clade</taxon>
        <taxon>Pooideae</taxon>
        <taxon>Triticodae</taxon>
        <taxon>Triticeae</taxon>
        <taxon>Triticinae</taxon>
        <taxon>Triticum</taxon>
    </lineage>
</organism>
<sequence>MRFLSTDMKDRNMLFAAITTNQPIRSKCSRLPDLHDFFPTNISQNFAITPNLDITPTPERIAGVTIVLQIEEYLGQNESEQGAVNLARTVLGARHRNGETWQGILEDIRAGGGMDNFIQNLPGAYPETPLDQFAIIPIIDLHVGNFYLSFTNEVLYMLLTVVLVVFLFFVVTKKGGGKSVPNAWQSLVELIYDFVLNLVNEQIGGLSGNVKQKFFPRISVTFTFSLFRNPQGMIPFSFTVTSHFLITLALSFSIFIGITIVGFQRHGLHFFSFLLPAGVPLPLAPFLVLLELISYCFRALSLGIRLFANMMAGHSLVKILSGFAWTMLFLNNIFYFIGDLGPLFIVLALTGLELGVAISQAHVSTISICIYLNDATNLHQNESFHN</sequence>
<keyword id="KW-0066">ATP synthesis</keyword>
<keyword id="KW-0138">CF(0)</keyword>
<keyword id="KW-0375">Hydrogen ion transport</keyword>
<keyword id="KW-0406">Ion transport</keyword>
<keyword id="KW-0472">Membrane</keyword>
<keyword id="KW-0496">Mitochondrion</keyword>
<keyword id="KW-0999">Mitochondrion inner membrane</keyword>
<keyword id="KW-0812">Transmembrane</keyword>
<keyword id="KW-1133">Transmembrane helix</keyword>
<keyword id="KW-0813">Transport</keyword>
<protein>
    <recommendedName>
        <fullName>ATP synthase subunit a</fullName>
    </recommendedName>
    <alternativeName>
        <fullName>F-ATPase protein 6</fullName>
    </alternativeName>
</protein>
<accession>P68526</accession>
<accession>P20599</accession>
<name>ATP6_TRITI</name>